<organism>
    <name type="scientific">Helicobacter pylori (strain Shi470)</name>
    <dbReference type="NCBI Taxonomy" id="512562"/>
    <lineage>
        <taxon>Bacteria</taxon>
        <taxon>Pseudomonadati</taxon>
        <taxon>Campylobacterota</taxon>
        <taxon>Epsilonproteobacteria</taxon>
        <taxon>Campylobacterales</taxon>
        <taxon>Helicobacteraceae</taxon>
        <taxon>Helicobacter</taxon>
    </lineage>
</organism>
<dbReference type="EMBL" id="CP001072">
    <property type="protein sequence ID" value="ACD48987.1"/>
    <property type="molecule type" value="Genomic_DNA"/>
</dbReference>
<dbReference type="RefSeq" id="WP_000258279.1">
    <property type="nucleotide sequence ID" value="NC_010698.2"/>
</dbReference>
<dbReference type="SMR" id="B2UVV5"/>
<dbReference type="GeneID" id="93237412"/>
<dbReference type="KEGG" id="hps:HPSH_08010"/>
<dbReference type="HOGENOM" id="CLU_040318_1_2_7"/>
<dbReference type="GO" id="GO:0022627">
    <property type="term" value="C:cytosolic small ribosomal subunit"/>
    <property type="evidence" value="ECO:0007669"/>
    <property type="project" value="TreeGrafter"/>
</dbReference>
<dbReference type="GO" id="GO:0003735">
    <property type="term" value="F:structural constituent of ribosome"/>
    <property type="evidence" value="ECO:0007669"/>
    <property type="project" value="InterPro"/>
</dbReference>
<dbReference type="GO" id="GO:0006412">
    <property type="term" value="P:translation"/>
    <property type="evidence" value="ECO:0007669"/>
    <property type="project" value="UniProtKB-UniRule"/>
</dbReference>
<dbReference type="CDD" id="cd01425">
    <property type="entry name" value="RPS2"/>
    <property type="match status" value="1"/>
</dbReference>
<dbReference type="FunFam" id="1.10.287.610:FF:000001">
    <property type="entry name" value="30S ribosomal protein S2"/>
    <property type="match status" value="1"/>
</dbReference>
<dbReference type="Gene3D" id="3.40.50.10490">
    <property type="entry name" value="Glucose-6-phosphate isomerase like protein, domain 1"/>
    <property type="match status" value="1"/>
</dbReference>
<dbReference type="Gene3D" id="1.10.287.610">
    <property type="entry name" value="Helix hairpin bin"/>
    <property type="match status" value="1"/>
</dbReference>
<dbReference type="HAMAP" id="MF_00291_B">
    <property type="entry name" value="Ribosomal_uS2_B"/>
    <property type="match status" value="1"/>
</dbReference>
<dbReference type="InterPro" id="IPR001865">
    <property type="entry name" value="Ribosomal_uS2"/>
</dbReference>
<dbReference type="InterPro" id="IPR005706">
    <property type="entry name" value="Ribosomal_uS2_bac/mit/plastid"/>
</dbReference>
<dbReference type="InterPro" id="IPR018130">
    <property type="entry name" value="Ribosomal_uS2_CS"/>
</dbReference>
<dbReference type="InterPro" id="IPR023591">
    <property type="entry name" value="Ribosomal_uS2_flav_dom_sf"/>
</dbReference>
<dbReference type="NCBIfam" id="TIGR01011">
    <property type="entry name" value="rpsB_bact"/>
    <property type="match status" value="1"/>
</dbReference>
<dbReference type="PANTHER" id="PTHR12534">
    <property type="entry name" value="30S RIBOSOMAL PROTEIN S2 PROKARYOTIC AND ORGANELLAR"/>
    <property type="match status" value="1"/>
</dbReference>
<dbReference type="PANTHER" id="PTHR12534:SF0">
    <property type="entry name" value="SMALL RIBOSOMAL SUBUNIT PROTEIN US2M"/>
    <property type="match status" value="1"/>
</dbReference>
<dbReference type="Pfam" id="PF00318">
    <property type="entry name" value="Ribosomal_S2"/>
    <property type="match status" value="1"/>
</dbReference>
<dbReference type="PRINTS" id="PR00395">
    <property type="entry name" value="RIBOSOMALS2"/>
</dbReference>
<dbReference type="SUPFAM" id="SSF52313">
    <property type="entry name" value="Ribosomal protein S2"/>
    <property type="match status" value="1"/>
</dbReference>
<dbReference type="PROSITE" id="PS00962">
    <property type="entry name" value="RIBOSOMAL_S2_1"/>
    <property type="match status" value="1"/>
</dbReference>
<dbReference type="PROSITE" id="PS00963">
    <property type="entry name" value="RIBOSOMAL_S2_2"/>
    <property type="match status" value="1"/>
</dbReference>
<protein>
    <recommendedName>
        <fullName evidence="1">Small ribosomal subunit protein uS2</fullName>
    </recommendedName>
    <alternativeName>
        <fullName evidence="2">30S ribosomal protein S2</fullName>
    </alternativeName>
</protein>
<reference key="1">
    <citation type="submission" date="2008-05" db="EMBL/GenBank/DDBJ databases">
        <title>Genome sequence of Helicobacter pylori from the remote Amazon: traces of Asian ancestry of the first Americans.</title>
        <authorList>
            <person name="Kersulyte D."/>
            <person name="Kalia A."/>
            <person name="Gilman R.H."/>
            <person name="Berg D.E."/>
        </authorList>
    </citation>
    <scope>NUCLEOTIDE SEQUENCE [LARGE SCALE GENOMIC DNA]</scope>
    <source>
        <strain>Shi470</strain>
    </source>
</reference>
<gene>
    <name evidence="1" type="primary">rpsB</name>
    <name type="ordered locus">HPSH_08010</name>
</gene>
<sequence length="264" mass="30666">MVTMKDLLECGVHFGHQTRRWNPKTKKFIFGVRKNIHIIDLQKTLRYFRYTYNIVRDASAQGKSIMFVGTKKQANETLKEFAESIQVPYVNYRWLGGMLTNFSTIRKSVRKLEIIEEMENSGQIDLLTKKEKLMILRKKEKLDKYLGGVRHMKKIPDMIFVIDVAKEKIAVAEARKLHIPIVAPLDTNCDPDLVDYPIPGNDDAIRSIRLFCKEMSEAILEGRELMQEEIVHADENSEEIEYVSNEEKEEMLAEIQKEITQGAE</sequence>
<accession>B2UVV5</accession>
<comment type="similarity">
    <text evidence="1">Belongs to the universal ribosomal protein uS2 family.</text>
</comment>
<name>RS2_HELPS</name>
<evidence type="ECO:0000255" key="1">
    <source>
        <dbReference type="HAMAP-Rule" id="MF_00291"/>
    </source>
</evidence>
<evidence type="ECO:0000305" key="2"/>
<keyword id="KW-0687">Ribonucleoprotein</keyword>
<keyword id="KW-0689">Ribosomal protein</keyword>
<feature type="chain" id="PRO_1000115027" description="Small ribosomal subunit protein uS2">
    <location>
        <begin position="1"/>
        <end position="264"/>
    </location>
</feature>
<proteinExistence type="inferred from homology"/>